<organism>
    <name type="scientific">Polynucleobacter necessarius subsp. necessarius (strain STIR1)</name>
    <dbReference type="NCBI Taxonomy" id="452638"/>
    <lineage>
        <taxon>Bacteria</taxon>
        <taxon>Pseudomonadati</taxon>
        <taxon>Pseudomonadota</taxon>
        <taxon>Betaproteobacteria</taxon>
        <taxon>Burkholderiales</taxon>
        <taxon>Burkholderiaceae</taxon>
        <taxon>Polynucleobacter</taxon>
    </lineage>
</organism>
<sequence length="468" mass="52542">MLFMHIRTRFAPSPTGFIHLGNLRSALYPWAFARHNKGDFILRIEDTDLERSTQEAVDVIIEGMTWLGLDLDEGPIYQMQRIDRYHEVVKQMLDSGLAYPCYMSEEELNLLRDQQMANKEKPHYNGLWRPEPGKMLPPIPEGVKPVIRFKNSIGGSVIWNDAVKGQIEISNDELDDLVIARSDGTPTYNFCVVIDDMDMQITHVIRGDDHVNNTPRQINIMKALGGTPPVYAHLPTVLNDSGEKMSKRNGAMSVRDYQKAGYLPDAILNYLARLGWSHGDAEVFSKEQFVAWFDLESLGRSPAQHNPEKLLWLNHQYIQNSDPDKLAEATKPFAHALGIDTESGPNFVQVVGLLKDRANTLIEIAEGAKLFYMPTPNLSDKQVRENIPETVIPALKDLVGAISSAEPTKEGYAAAFKQVLAQHQLKMPALAMPVRYALFATTQTPAIDSVLVVMGRDEAIKRLSKVIR</sequence>
<comment type="function">
    <text evidence="1">Catalyzes the attachment of glutamate to tRNA(Glu) in a two-step reaction: glutamate is first activated by ATP to form Glu-AMP and then transferred to the acceptor end of tRNA(Glu).</text>
</comment>
<comment type="catalytic activity">
    <reaction evidence="1">
        <text>tRNA(Glu) + L-glutamate + ATP = L-glutamyl-tRNA(Glu) + AMP + diphosphate</text>
        <dbReference type="Rhea" id="RHEA:23540"/>
        <dbReference type="Rhea" id="RHEA-COMP:9663"/>
        <dbReference type="Rhea" id="RHEA-COMP:9680"/>
        <dbReference type="ChEBI" id="CHEBI:29985"/>
        <dbReference type="ChEBI" id="CHEBI:30616"/>
        <dbReference type="ChEBI" id="CHEBI:33019"/>
        <dbReference type="ChEBI" id="CHEBI:78442"/>
        <dbReference type="ChEBI" id="CHEBI:78520"/>
        <dbReference type="ChEBI" id="CHEBI:456215"/>
        <dbReference type="EC" id="6.1.1.17"/>
    </reaction>
</comment>
<comment type="subunit">
    <text evidence="1">Monomer.</text>
</comment>
<comment type="subcellular location">
    <subcellularLocation>
        <location evidence="1">Cytoplasm</location>
    </subcellularLocation>
</comment>
<comment type="similarity">
    <text evidence="1">Belongs to the class-I aminoacyl-tRNA synthetase family. Glutamate--tRNA ligase type 1 subfamily.</text>
</comment>
<protein>
    <recommendedName>
        <fullName evidence="1">Glutamate--tRNA ligase</fullName>
        <ecNumber evidence="1">6.1.1.17</ecNumber>
    </recommendedName>
    <alternativeName>
        <fullName evidence="1">Glutamyl-tRNA synthetase</fullName>
        <shortName evidence="1">GluRS</shortName>
    </alternativeName>
</protein>
<name>SYE_POLNS</name>
<reference key="1">
    <citation type="journal article" date="2013" name="Proc. Natl. Acad. Sci. U.S.A.">
        <title>Polynucleobacter necessarius, a model for genome reduction in both free-living and symbiotic bacteria.</title>
        <authorList>
            <person name="Boscaro V."/>
            <person name="Felletti M."/>
            <person name="Vannini C."/>
            <person name="Ackerman M.S."/>
            <person name="Chain P.S."/>
            <person name="Malfatti S."/>
            <person name="Vergez L.M."/>
            <person name="Shin M."/>
            <person name="Doak T.G."/>
            <person name="Lynch M."/>
            <person name="Petroni G."/>
        </authorList>
    </citation>
    <scope>NUCLEOTIDE SEQUENCE [LARGE SCALE GENOMIC DNA]</scope>
    <source>
        <strain>STIR1</strain>
    </source>
</reference>
<gene>
    <name evidence="1" type="primary">gltX</name>
    <name type="ordered locus">Pnec_0894</name>
</gene>
<proteinExistence type="inferred from homology"/>
<accession>B1XUR6</accession>
<feature type="chain" id="PRO_1000090095" description="Glutamate--tRNA ligase">
    <location>
        <begin position="1"/>
        <end position="468"/>
    </location>
</feature>
<feature type="short sequence motif" description="'HIGH' region" evidence="1">
    <location>
        <begin position="12"/>
        <end position="22"/>
    </location>
</feature>
<feature type="short sequence motif" description="'KMSKS' region" evidence="1">
    <location>
        <begin position="244"/>
        <end position="248"/>
    </location>
</feature>
<feature type="binding site" evidence="1">
    <location>
        <position position="247"/>
    </location>
    <ligand>
        <name>ATP</name>
        <dbReference type="ChEBI" id="CHEBI:30616"/>
    </ligand>
</feature>
<dbReference type="EC" id="6.1.1.17" evidence="1"/>
<dbReference type="EMBL" id="CP001010">
    <property type="protein sequence ID" value="ACB44093.1"/>
    <property type="molecule type" value="Genomic_DNA"/>
</dbReference>
<dbReference type="SMR" id="B1XUR6"/>
<dbReference type="STRING" id="452638.Pnec_0894"/>
<dbReference type="KEGG" id="pne:Pnec_0894"/>
<dbReference type="eggNOG" id="COG0008">
    <property type="taxonomic scope" value="Bacteria"/>
</dbReference>
<dbReference type="HOGENOM" id="CLU_015768_6_0_4"/>
<dbReference type="OrthoDB" id="9807503at2"/>
<dbReference type="GO" id="GO:0005829">
    <property type="term" value="C:cytosol"/>
    <property type="evidence" value="ECO:0007669"/>
    <property type="project" value="TreeGrafter"/>
</dbReference>
<dbReference type="GO" id="GO:0005524">
    <property type="term" value="F:ATP binding"/>
    <property type="evidence" value="ECO:0007669"/>
    <property type="project" value="UniProtKB-UniRule"/>
</dbReference>
<dbReference type="GO" id="GO:0004818">
    <property type="term" value="F:glutamate-tRNA ligase activity"/>
    <property type="evidence" value="ECO:0007669"/>
    <property type="project" value="UniProtKB-UniRule"/>
</dbReference>
<dbReference type="GO" id="GO:0000049">
    <property type="term" value="F:tRNA binding"/>
    <property type="evidence" value="ECO:0007669"/>
    <property type="project" value="InterPro"/>
</dbReference>
<dbReference type="GO" id="GO:0008270">
    <property type="term" value="F:zinc ion binding"/>
    <property type="evidence" value="ECO:0007669"/>
    <property type="project" value="InterPro"/>
</dbReference>
<dbReference type="GO" id="GO:0006424">
    <property type="term" value="P:glutamyl-tRNA aminoacylation"/>
    <property type="evidence" value="ECO:0007669"/>
    <property type="project" value="UniProtKB-UniRule"/>
</dbReference>
<dbReference type="CDD" id="cd00808">
    <property type="entry name" value="GluRS_core"/>
    <property type="match status" value="1"/>
</dbReference>
<dbReference type="FunFam" id="3.40.50.620:FF:000007">
    <property type="entry name" value="Glutamate--tRNA ligase"/>
    <property type="match status" value="1"/>
</dbReference>
<dbReference type="Gene3D" id="1.10.10.350">
    <property type="match status" value="1"/>
</dbReference>
<dbReference type="Gene3D" id="1.10.8.70">
    <property type="entry name" value="Glutamate-tRNA synthetase, class I, anticodon-binding domain 1"/>
    <property type="match status" value="1"/>
</dbReference>
<dbReference type="Gene3D" id="3.40.50.620">
    <property type="entry name" value="HUPs"/>
    <property type="match status" value="1"/>
</dbReference>
<dbReference type="HAMAP" id="MF_00022">
    <property type="entry name" value="Glu_tRNA_synth_type1"/>
    <property type="match status" value="1"/>
</dbReference>
<dbReference type="InterPro" id="IPR045462">
    <property type="entry name" value="aa-tRNA-synth_I_cd-bd"/>
</dbReference>
<dbReference type="InterPro" id="IPR020751">
    <property type="entry name" value="aa-tRNA-synth_I_codon-bd_sub2"/>
</dbReference>
<dbReference type="InterPro" id="IPR001412">
    <property type="entry name" value="aa-tRNA-synth_I_CS"/>
</dbReference>
<dbReference type="InterPro" id="IPR008925">
    <property type="entry name" value="aa_tRNA-synth_I_cd-bd_sf"/>
</dbReference>
<dbReference type="InterPro" id="IPR004527">
    <property type="entry name" value="Glu-tRNA-ligase_bac/mito"/>
</dbReference>
<dbReference type="InterPro" id="IPR020752">
    <property type="entry name" value="Glu-tRNA-synth_I_codon-bd_sub1"/>
</dbReference>
<dbReference type="InterPro" id="IPR000924">
    <property type="entry name" value="Glu/Gln-tRNA-synth"/>
</dbReference>
<dbReference type="InterPro" id="IPR020058">
    <property type="entry name" value="Glu/Gln-tRNA-synth_Ib_cat-dom"/>
</dbReference>
<dbReference type="InterPro" id="IPR049940">
    <property type="entry name" value="GluQ/Sye"/>
</dbReference>
<dbReference type="InterPro" id="IPR033910">
    <property type="entry name" value="GluRS_core"/>
</dbReference>
<dbReference type="InterPro" id="IPR014729">
    <property type="entry name" value="Rossmann-like_a/b/a_fold"/>
</dbReference>
<dbReference type="NCBIfam" id="TIGR00464">
    <property type="entry name" value="gltX_bact"/>
    <property type="match status" value="1"/>
</dbReference>
<dbReference type="PANTHER" id="PTHR43311">
    <property type="entry name" value="GLUTAMATE--TRNA LIGASE"/>
    <property type="match status" value="1"/>
</dbReference>
<dbReference type="PANTHER" id="PTHR43311:SF2">
    <property type="entry name" value="GLUTAMATE--TRNA LIGASE, MITOCHONDRIAL-RELATED"/>
    <property type="match status" value="1"/>
</dbReference>
<dbReference type="Pfam" id="PF19269">
    <property type="entry name" value="Anticodon_2"/>
    <property type="match status" value="1"/>
</dbReference>
<dbReference type="Pfam" id="PF00749">
    <property type="entry name" value="tRNA-synt_1c"/>
    <property type="match status" value="1"/>
</dbReference>
<dbReference type="PRINTS" id="PR00987">
    <property type="entry name" value="TRNASYNTHGLU"/>
</dbReference>
<dbReference type="SUPFAM" id="SSF48163">
    <property type="entry name" value="An anticodon-binding domain of class I aminoacyl-tRNA synthetases"/>
    <property type="match status" value="1"/>
</dbReference>
<dbReference type="SUPFAM" id="SSF52374">
    <property type="entry name" value="Nucleotidylyl transferase"/>
    <property type="match status" value="1"/>
</dbReference>
<dbReference type="PROSITE" id="PS00178">
    <property type="entry name" value="AA_TRNA_LIGASE_I"/>
    <property type="match status" value="1"/>
</dbReference>
<evidence type="ECO:0000255" key="1">
    <source>
        <dbReference type="HAMAP-Rule" id="MF_00022"/>
    </source>
</evidence>
<keyword id="KW-0030">Aminoacyl-tRNA synthetase</keyword>
<keyword id="KW-0067">ATP-binding</keyword>
<keyword id="KW-0963">Cytoplasm</keyword>
<keyword id="KW-0436">Ligase</keyword>
<keyword id="KW-0547">Nucleotide-binding</keyword>
<keyword id="KW-0648">Protein biosynthesis</keyword>